<organism>
    <name type="scientific">Nicotiana tabacum</name>
    <name type="common">Common tobacco</name>
    <dbReference type="NCBI Taxonomy" id="4097"/>
    <lineage>
        <taxon>Eukaryota</taxon>
        <taxon>Viridiplantae</taxon>
        <taxon>Streptophyta</taxon>
        <taxon>Embryophyta</taxon>
        <taxon>Tracheophyta</taxon>
        <taxon>Spermatophyta</taxon>
        <taxon>Magnoliopsida</taxon>
        <taxon>eudicotyledons</taxon>
        <taxon>Gunneridae</taxon>
        <taxon>Pentapetalae</taxon>
        <taxon>asterids</taxon>
        <taxon>lamiids</taxon>
        <taxon>Solanales</taxon>
        <taxon>Solanaceae</taxon>
        <taxon>Nicotianoideae</taxon>
        <taxon>Nicotianeae</taxon>
        <taxon>Nicotiana</taxon>
    </lineage>
</organism>
<reference key="1">
    <citation type="journal article" date="2002" name="Plant J.">
        <title>Six active phage-type RNA polymerase genes in Nicotiana tabacum.</title>
        <authorList>
            <person name="Hedtke B."/>
            <person name="Legen J."/>
            <person name="Weihe A."/>
            <person name="Herrmann R.G."/>
            <person name="Boerner T."/>
        </authorList>
    </citation>
    <scope>NUCLEOTIDE SEQUENCE [GENOMIC DNA]</scope>
    <scope>SUBCELLULAR LOCATION</scope>
</reference>
<comment type="function">
    <text>DNA-dependent RNA polymerase catalyzes the transcription of DNA into RNA using the four ribonucleoside triphosphates as substrates.</text>
</comment>
<comment type="catalytic activity">
    <reaction evidence="3 4">
        <text>RNA(n) + a ribonucleoside 5'-triphosphate = RNA(n+1) + diphosphate</text>
        <dbReference type="Rhea" id="RHEA:21248"/>
        <dbReference type="Rhea" id="RHEA-COMP:14527"/>
        <dbReference type="Rhea" id="RHEA-COMP:17342"/>
        <dbReference type="ChEBI" id="CHEBI:33019"/>
        <dbReference type="ChEBI" id="CHEBI:61557"/>
        <dbReference type="ChEBI" id="CHEBI:140395"/>
        <dbReference type="EC" id="2.7.7.6"/>
    </reaction>
</comment>
<comment type="subcellular location">
    <subcellularLocation>
        <location evidence="5">Plastid</location>
        <location evidence="5">Chloroplast</location>
    </subcellularLocation>
</comment>
<comment type="similarity">
    <text evidence="6">Belongs to the phage and mitochondrial RNA polymerase family.</text>
</comment>
<accession>P69243</accession>
<accession>Q8L4F8</accession>
<feature type="transit peptide" description="Chloroplast" evidence="2">
    <location>
        <begin position="1"/>
        <end position="72"/>
    </location>
</feature>
<feature type="chain" id="PRO_0000031075" description="DNA-directed RNA polymerase 3A, chloroplastic">
    <location>
        <begin position="73"/>
        <end position="977"/>
    </location>
</feature>
<feature type="active site" evidence="1">
    <location>
        <position position="678"/>
    </location>
</feature>
<feature type="active site" evidence="1">
    <location>
        <position position="753"/>
    </location>
</feature>
<feature type="active site" evidence="1">
    <location>
        <position position="910"/>
    </location>
</feature>
<gene>
    <name type="primary">RPOT3-SYL</name>
</gene>
<keyword id="KW-0150">Chloroplast</keyword>
<keyword id="KW-0240">DNA-directed RNA polymerase</keyword>
<keyword id="KW-0548">Nucleotidyltransferase</keyword>
<keyword id="KW-0934">Plastid</keyword>
<keyword id="KW-1185">Reference proteome</keyword>
<keyword id="KW-0804">Transcription</keyword>
<keyword id="KW-0808">Transferase</keyword>
<keyword id="KW-0809">Transit peptide</keyword>
<evidence type="ECO:0000250" key="1"/>
<evidence type="ECO:0000255" key="2"/>
<evidence type="ECO:0000255" key="3">
    <source>
        <dbReference type="PROSITE-ProRule" id="PRU10031"/>
    </source>
</evidence>
<evidence type="ECO:0000255" key="4">
    <source>
        <dbReference type="PROSITE-ProRule" id="PRU10032"/>
    </source>
</evidence>
<evidence type="ECO:0000269" key="5">
    <source>
    </source>
</evidence>
<evidence type="ECO:0000305" key="6"/>
<protein>
    <recommendedName>
        <fullName>DNA-directed RNA polymerase 3A, chloroplastic</fullName>
        <ecNumber>2.7.7.6</ecNumber>
    </recommendedName>
    <alternativeName>
        <fullName>NictaRpoT3-syl</fullName>
    </alternativeName>
    <alternativeName>
        <fullName>T7 bacteriophage-type single subunit RNA polymerase 3A</fullName>
    </alternativeName>
</protein>
<name>RPO3A_TOBAC</name>
<proteinExistence type="inferred from homology"/>
<dbReference type="EC" id="2.7.7.6"/>
<dbReference type="EMBL" id="AJ416576">
    <property type="protein sequence ID" value="CAC95027.2"/>
    <property type="molecule type" value="Genomic_DNA"/>
</dbReference>
<dbReference type="SMR" id="P69243"/>
<dbReference type="STRING" id="4097.P69243"/>
<dbReference type="PaxDb" id="4097-P69243"/>
<dbReference type="Proteomes" id="UP000084051">
    <property type="component" value="Unplaced"/>
</dbReference>
<dbReference type="GO" id="GO:0009507">
    <property type="term" value="C:chloroplast"/>
    <property type="evidence" value="ECO:0007669"/>
    <property type="project" value="UniProtKB-SubCell"/>
</dbReference>
<dbReference type="GO" id="GO:0034245">
    <property type="term" value="C:mitochondrial DNA-directed RNA polymerase complex"/>
    <property type="evidence" value="ECO:0000318"/>
    <property type="project" value="GO_Central"/>
</dbReference>
<dbReference type="GO" id="GO:0003677">
    <property type="term" value="F:DNA binding"/>
    <property type="evidence" value="ECO:0007669"/>
    <property type="project" value="InterPro"/>
</dbReference>
<dbReference type="GO" id="GO:0003899">
    <property type="term" value="F:DNA-directed RNA polymerase activity"/>
    <property type="evidence" value="ECO:0000318"/>
    <property type="project" value="GO_Central"/>
</dbReference>
<dbReference type="GO" id="GO:0006390">
    <property type="term" value="P:mitochondrial transcription"/>
    <property type="evidence" value="ECO:0000318"/>
    <property type="project" value="GO_Central"/>
</dbReference>
<dbReference type="FunFam" id="1.10.1320.10:FF:000001">
    <property type="entry name" value="DNA-directed RNA polymerase"/>
    <property type="match status" value="1"/>
</dbReference>
<dbReference type="FunFam" id="1.10.150.20:FF:000027">
    <property type="entry name" value="DNA-directed RNA polymerase"/>
    <property type="match status" value="1"/>
</dbReference>
<dbReference type="FunFam" id="1.10.287.260:FF:000001">
    <property type="entry name" value="DNA-directed RNA polymerase"/>
    <property type="match status" value="1"/>
</dbReference>
<dbReference type="FunFam" id="1.10.287.280:FF:000001">
    <property type="entry name" value="DNA-directed RNA polymerase"/>
    <property type="match status" value="1"/>
</dbReference>
<dbReference type="Gene3D" id="1.10.287.260">
    <property type="match status" value="1"/>
</dbReference>
<dbReference type="Gene3D" id="1.10.287.280">
    <property type="match status" value="1"/>
</dbReference>
<dbReference type="Gene3D" id="1.10.150.20">
    <property type="entry name" value="5' to 3' exonuclease, C-terminal subdomain"/>
    <property type="match status" value="1"/>
</dbReference>
<dbReference type="Gene3D" id="1.10.1320.10">
    <property type="entry name" value="DNA-directed RNA polymerase, N-terminal domain"/>
    <property type="match status" value="1"/>
</dbReference>
<dbReference type="InterPro" id="IPR024075">
    <property type="entry name" value="DNA-dir_RNA_pol_helix_hairp_sf"/>
</dbReference>
<dbReference type="InterPro" id="IPR046950">
    <property type="entry name" value="DNA-dir_Rpol_C_phage-type"/>
</dbReference>
<dbReference type="InterPro" id="IPR002092">
    <property type="entry name" value="DNA-dir_Rpol_phage-type"/>
</dbReference>
<dbReference type="InterPro" id="IPR043502">
    <property type="entry name" value="DNA/RNA_pol_sf"/>
</dbReference>
<dbReference type="InterPro" id="IPR037159">
    <property type="entry name" value="RNA_POL_N_sf"/>
</dbReference>
<dbReference type="InterPro" id="IPR029262">
    <property type="entry name" value="RPOL_N"/>
</dbReference>
<dbReference type="PANTHER" id="PTHR10102:SF1">
    <property type="entry name" value="DNA-DIRECTED RNA POLYMERASE 3, CHLOROPLASTIC"/>
    <property type="match status" value="1"/>
</dbReference>
<dbReference type="PANTHER" id="PTHR10102">
    <property type="entry name" value="DNA-DIRECTED RNA POLYMERASE, MITOCHONDRIAL"/>
    <property type="match status" value="1"/>
</dbReference>
<dbReference type="Pfam" id="PF00940">
    <property type="entry name" value="RNA_pol"/>
    <property type="match status" value="1"/>
</dbReference>
<dbReference type="Pfam" id="PF14700">
    <property type="entry name" value="RPOL_N"/>
    <property type="match status" value="1"/>
</dbReference>
<dbReference type="SMART" id="SM01311">
    <property type="entry name" value="RPOL_N"/>
    <property type="match status" value="1"/>
</dbReference>
<dbReference type="SUPFAM" id="SSF56672">
    <property type="entry name" value="DNA/RNA polymerases"/>
    <property type="match status" value="1"/>
</dbReference>
<dbReference type="PROSITE" id="PS00900">
    <property type="entry name" value="RNA_POL_PHAGE_1"/>
    <property type="match status" value="1"/>
</dbReference>
<dbReference type="PROSITE" id="PS00489">
    <property type="entry name" value="RNA_POL_PHAGE_2"/>
    <property type="match status" value="1"/>
</dbReference>
<sequence length="977" mass="111424">MASTASYSPSPTSQWRTQKLPKRFNFYVIHNQEFGKLSQSSSLPTSSFPKTLKLPVIQMPINNNIQSQTTVCVSTDENLEELVNLQKIANGVLTKESNKRVFIQDPPWVSSLFMNSLFVRAKQVQGVRREFREIERRRRYAMLRRRQIKAETEAWEQMVEEYRELEREMCEKKLAPNLPYVKKLLLGWFEPLRQAIEKEQNAETTVKHRAAFAPHIDSLPADKMAVIVMHKLMGLLMMGGKEERCVQVVQAAVQIGMAVENEVRIHNFLEKTKKLQKHMTGAQSQEDMSRETMILRKRVKSLIKRNRVVEVRKLMKSEEPESWGRDTQAKLGCRLLELLTETAYVQPPVDQSADTPPDIRPAFRHVFRIATRDPGKSIVKKYGVIECDPLVVAGVDRTVKQMMIPYVPMLVPPKKWRGYDKGGYLFLPSYLMRTHGSRRQQDAVRSVPTKQMQQVYEALDTLGSTKWRVNKRILSVVESIWAGGGNIAGLVDRKDVPIPELHSDDIMEVKKWKWRVRKSKKINQELHSQRCDTELKLSVARKLKDEEGFYYPHNLDFRGRAYPMHPHLNHLSSDLCRGILEFAEGRPLGKSGLRWLKIHLASLYAGGIEKLCYDARLAFVENHIDDILDSANNPLNGNRWWLNAEDPFQCLAACINLSEALKSSSPHTVFSHLPIHQDGSCNGLQHYAALGRDSMEAAAVNLVAGDKPADVYTEIALRVDHIIRGDSIKDPATDPNALLAKLLIDQVDRKLVKQTVMTSVYGVTYVGAREQIKRRLEEKGLIDDDRLLFTASCYAAKVTLAALGELFQAARGTMTWLGDCAKVIASENQPVRWTTPLGLPVVQPYFKTQRHVIRTSLQVLALQREGDTVEVRKQRTAFPPNFVHSLDGSHMMMTAVACRDAGLQFAGVHDSFWTHACDVDQMNRILREKFVELYSMPILEDLLESFQNSYPALTFPPLPKRGDFDLVEVLESPYFFN</sequence>